<gene>
    <name evidence="1" type="primary">thrB</name>
    <name type="ordered locus">SaurJH1_1418</name>
</gene>
<comment type="function">
    <text evidence="1">Catalyzes the ATP-dependent phosphorylation of L-homoserine to L-homoserine phosphate.</text>
</comment>
<comment type="catalytic activity">
    <reaction evidence="1">
        <text>L-homoserine + ATP = O-phospho-L-homoserine + ADP + H(+)</text>
        <dbReference type="Rhea" id="RHEA:13985"/>
        <dbReference type="ChEBI" id="CHEBI:15378"/>
        <dbReference type="ChEBI" id="CHEBI:30616"/>
        <dbReference type="ChEBI" id="CHEBI:57476"/>
        <dbReference type="ChEBI" id="CHEBI:57590"/>
        <dbReference type="ChEBI" id="CHEBI:456216"/>
        <dbReference type="EC" id="2.7.1.39"/>
    </reaction>
</comment>
<comment type="pathway">
    <text evidence="1">Amino-acid biosynthesis; L-threonine biosynthesis; L-threonine from L-aspartate: step 4/5.</text>
</comment>
<comment type="subcellular location">
    <subcellularLocation>
        <location evidence="1">Cytoplasm</location>
    </subcellularLocation>
</comment>
<comment type="similarity">
    <text evidence="1">Belongs to the GHMP kinase family. Homoserine kinase subfamily.</text>
</comment>
<keyword id="KW-0028">Amino-acid biosynthesis</keyword>
<keyword id="KW-0067">ATP-binding</keyword>
<keyword id="KW-0963">Cytoplasm</keyword>
<keyword id="KW-0418">Kinase</keyword>
<keyword id="KW-0547">Nucleotide-binding</keyword>
<keyword id="KW-0791">Threonine biosynthesis</keyword>
<keyword id="KW-0808">Transferase</keyword>
<reference key="1">
    <citation type="submission" date="2007-06" db="EMBL/GenBank/DDBJ databases">
        <title>Complete sequence of chromosome of Staphylococcus aureus subsp. aureus JH1.</title>
        <authorList>
            <consortium name="US DOE Joint Genome Institute"/>
            <person name="Copeland A."/>
            <person name="Lucas S."/>
            <person name="Lapidus A."/>
            <person name="Barry K."/>
            <person name="Detter J.C."/>
            <person name="Glavina del Rio T."/>
            <person name="Hammon N."/>
            <person name="Israni S."/>
            <person name="Dalin E."/>
            <person name="Tice H."/>
            <person name="Pitluck S."/>
            <person name="Chain P."/>
            <person name="Malfatti S."/>
            <person name="Shin M."/>
            <person name="Vergez L."/>
            <person name="Schmutz J."/>
            <person name="Larimer F."/>
            <person name="Land M."/>
            <person name="Hauser L."/>
            <person name="Kyrpides N."/>
            <person name="Ivanova N."/>
            <person name="Tomasz A."/>
            <person name="Richardson P."/>
        </authorList>
    </citation>
    <scope>NUCLEOTIDE SEQUENCE [LARGE SCALE GENOMIC DNA]</scope>
    <source>
        <strain>JH1</strain>
    </source>
</reference>
<evidence type="ECO:0000255" key="1">
    <source>
        <dbReference type="HAMAP-Rule" id="MF_00384"/>
    </source>
</evidence>
<protein>
    <recommendedName>
        <fullName evidence="1">Homoserine kinase</fullName>
        <shortName evidence="1">HK</shortName>
        <shortName evidence="1">HSK</shortName>
        <ecNumber evidence="1">2.7.1.39</ecNumber>
    </recommendedName>
</protein>
<dbReference type="EC" id="2.7.1.39" evidence="1"/>
<dbReference type="EMBL" id="CP000736">
    <property type="protein sequence ID" value="ABR52268.1"/>
    <property type="molecule type" value="Genomic_DNA"/>
</dbReference>
<dbReference type="SMR" id="A6U1F0"/>
<dbReference type="KEGG" id="sah:SaurJH1_1418"/>
<dbReference type="HOGENOM" id="CLU_041243_0_0_9"/>
<dbReference type="UniPathway" id="UPA00050">
    <property type="reaction ID" value="UER00064"/>
</dbReference>
<dbReference type="GO" id="GO:0005737">
    <property type="term" value="C:cytoplasm"/>
    <property type="evidence" value="ECO:0007669"/>
    <property type="project" value="UniProtKB-SubCell"/>
</dbReference>
<dbReference type="GO" id="GO:0005524">
    <property type="term" value="F:ATP binding"/>
    <property type="evidence" value="ECO:0007669"/>
    <property type="project" value="UniProtKB-UniRule"/>
</dbReference>
<dbReference type="GO" id="GO:0004413">
    <property type="term" value="F:homoserine kinase activity"/>
    <property type="evidence" value="ECO:0007669"/>
    <property type="project" value="UniProtKB-UniRule"/>
</dbReference>
<dbReference type="GO" id="GO:0009088">
    <property type="term" value="P:threonine biosynthetic process"/>
    <property type="evidence" value="ECO:0007669"/>
    <property type="project" value="UniProtKB-UniRule"/>
</dbReference>
<dbReference type="Gene3D" id="3.30.230.10">
    <property type="match status" value="1"/>
</dbReference>
<dbReference type="Gene3D" id="3.30.70.890">
    <property type="entry name" value="GHMP kinase, C-terminal domain"/>
    <property type="match status" value="1"/>
</dbReference>
<dbReference type="HAMAP" id="MF_00384">
    <property type="entry name" value="Homoser_kinase"/>
    <property type="match status" value="1"/>
</dbReference>
<dbReference type="InterPro" id="IPR013750">
    <property type="entry name" value="GHMP_kinase_C_dom"/>
</dbReference>
<dbReference type="InterPro" id="IPR036554">
    <property type="entry name" value="GHMP_kinase_C_sf"/>
</dbReference>
<dbReference type="InterPro" id="IPR006204">
    <property type="entry name" value="GHMP_kinase_N_dom"/>
</dbReference>
<dbReference type="InterPro" id="IPR006203">
    <property type="entry name" value="GHMP_knse_ATP-bd_CS"/>
</dbReference>
<dbReference type="InterPro" id="IPR000870">
    <property type="entry name" value="Homoserine_kinase"/>
</dbReference>
<dbReference type="InterPro" id="IPR020568">
    <property type="entry name" value="Ribosomal_Su5_D2-typ_SF"/>
</dbReference>
<dbReference type="InterPro" id="IPR014721">
    <property type="entry name" value="Ribsml_uS5_D2-typ_fold_subgr"/>
</dbReference>
<dbReference type="NCBIfam" id="TIGR00191">
    <property type="entry name" value="thrB"/>
    <property type="match status" value="1"/>
</dbReference>
<dbReference type="PANTHER" id="PTHR20861:SF1">
    <property type="entry name" value="HOMOSERINE KINASE"/>
    <property type="match status" value="1"/>
</dbReference>
<dbReference type="PANTHER" id="PTHR20861">
    <property type="entry name" value="HOMOSERINE/4-DIPHOSPHOCYTIDYL-2-C-METHYL-D-ERYTHRITOL KINASE"/>
    <property type="match status" value="1"/>
</dbReference>
<dbReference type="Pfam" id="PF08544">
    <property type="entry name" value="GHMP_kinases_C"/>
    <property type="match status" value="1"/>
</dbReference>
<dbReference type="Pfam" id="PF00288">
    <property type="entry name" value="GHMP_kinases_N"/>
    <property type="match status" value="1"/>
</dbReference>
<dbReference type="PIRSF" id="PIRSF000676">
    <property type="entry name" value="Homoser_kin"/>
    <property type="match status" value="1"/>
</dbReference>
<dbReference type="PRINTS" id="PR00958">
    <property type="entry name" value="HOMSERKINASE"/>
</dbReference>
<dbReference type="SUPFAM" id="SSF55060">
    <property type="entry name" value="GHMP Kinase, C-terminal domain"/>
    <property type="match status" value="1"/>
</dbReference>
<dbReference type="SUPFAM" id="SSF54211">
    <property type="entry name" value="Ribosomal protein S5 domain 2-like"/>
    <property type="match status" value="1"/>
</dbReference>
<dbReference type="PROSITE" id="PS00627">
    <property type="entry name" value="GHMP_KINASES_ATP"/>
    <property type="match status" value="1"/>
</dbReference>
<sequence length="304" mass="33250">MSNVLELTIPASTANLGVGFDSIGMALDKFLHLSVKETSGTKWEYIFHDDASKQLPTDETNFIYHVAQQVASKYSVDLPILCIEMRSDIPLARGLGSSASALVGAIYIANYFGDIQLSKHEVLQLATEIEGHPDNVAPTIYGGLIAGFYNDVSKETSVAHIDIPDVDVIVTIPTYELKTEASRRALPQKLTHSEAVKSSAISNTMICALAQHNYELAGKLMQQDGFHEPYRQHLIAEFDEVKTIASQHNAYATVISGAGPTILIFSRKENSGELVRSLNSQVVSCHSELVDINISGVKERIVYQ</sequence>
<organism>
    <name type="scientific">Staphylococcus aureus (strain JH1)</name>
    <dbReference type="NCBI Taxonomy" id="359787"/>
    <lineage>
        <taxon>Bacteria</taxon>
        <taxon>Bacillati</taxon>
        <taxon>Bacillota</taxon>
        <taxon>Bacilli</taxon>
        <taxon>Bacillales</taxon>
        <taxon>Staphylococcaceae</taxon>
        <taxon>Staphylococcus</taxon>
    </lineage>
</organism>
<proteinExistence type="inferred from homology"/>
<name>KHSE_STAA2</name>
<feature type="chain" id="PRO_1000080129" description="Homoserine kinase">
    <location>
        <begin position="1"/>
        <end position="304"/>
    </location>
</feature>
<feature type="binding site" evidence="1">
    <location>
        <begin position="90"/>
        <end position="100"/>
    </location>
    <ligand>
        <name>ATP</name>
        <dbReference type="ChEBI" id="CHEBI:30616"/>
    </ligand>
</feature>
<accession>A6U1F0</accession>